<name>TBA3_HOMAM</name>
<dbReference type="EC" id="3.6.5.-" evidence="2"/>
<dbReference type="EMBL" id="U68764">
    <property type="protein sequence ID" value="AAB08889.1"/>
    <property type="molecule type" value="mRNA"/>
</dbReference>
<dbReference type="SMR" id="Q94572"/>
<dbReference type="OrthoDB" id="1844at2759"/>
<dbReference type="GO" id="GO:0005737">
    <property type="term" value="C:cytoplasm"/>
    <property type="evidence" value="ECO:0007669"/>
    <property type="project" value="UniProtKB-KW"/>
</dbReference>
<dbReference type="GO" id="GO:0005874">
    <property type="term" value="C:microtubule"/>
    <property type="evidence" value="ECO:0007669"/>
    <property type="project" value="UniProtKB-KW"/>
</dbReference>
<dbReference type="GO" id="GO:0005525">
    <property type="term" value="F:GTP binding"/>
    <property type="evidence" value="ECO:0007669"/>
    <property type="project" value="UniProtKB-KW"/>
</dbReference>
<dbReference type="GO" id="GO:0016787">
    <property type="term" value="F:hydrolase activity"/>
    <property type="evidence" value="ECO:0007669"/>
    <property type="project" value="UniProtKB-KW"/>
</dbReference>
<dbReference type="GO" id="GO:0046872">
    <property type="term" value="F:metal ion binding"/>
    <property type="evidence" value="ECO:0007669"/>
    <property type="project" value="UniProtKB-KW"/>
</dbReference>
<dbReference type="GO" id="GO:0005200">
    <property type="term" value="F:structural constituent of cytoskeleton"/>
    <property type="evidence" value="ECO:0007669"/>
    <property type="project" value="InterPro"/>
</dbReference>
<dbReference type="GO" id="GO:0007017">
    <property type="term" value="P:microtubule-based process"/>
    <property type="evidence" value="ECO:0007669"/>
    <property type="project" value="InterPro"/>
</dbReference>
<dbReference type="CDD" id="cd02186">
    <property type="entry name" value="alpha_tubulin"/>
    <property type="match status" value="1"/>
</dbReference>
<dbReference type="FunFam" id="1.10.287.600:FF:000005">
    <property type="entry name" value="Tubulin alpha chain"/>
    <property type="match status" value="1"/>
</dbReference>
<dbReference type="FunFam" id="3.30.1330.20:FF:000001">
    <property type="entry name" value="Tubulin alpha chain"/>
    <property type="match status" value="1"/>
</dbReference>
<dbReference type="FunFam" id="3.40.50.1440:FF:000002">
    <property type="entry name" value="Tubulin alpha chain"/>
    <property type="match status" value="1"/>
</dbReference>
<dbReference type="Gene3D" id="1.10.287.600">
    <property type="entry name" value="Helix hairpin bin"/>
    <property type="match status" value="1"/>
</dbReference>
<dbReference type="Gene3D" id="3.30.1330.20">
    <property type="entry name" value="Tubulin/FtsZ, C-terminal domain"/>
    <property type="match status" value="1"/>
</dbReference>
<dbReference type="Gene3D" id="3.40.50.1440">
    <property type="entry name" value="Tubulin/FtsZ, GTPase domain"/>
    <property type="match status" value="1"/>
</dbReference>
<dbReference type="InterPro" id="IPR002452">
    <property type="entry name" value="Alpha_tubulin"/>
</dbReference>
<dbReference type="InterPro" id="IPR008280">
    <property type="entry name" value="Tub_FtsZ_C"/>
</dbReference>
<dbReference type="InterPro" id="IPR000217">
    <property type="entry name" value="Tubulin"/>
</dbReference>
<dbReference type="InterPro" id="IPR037103">
    <property type="entry name" value="Tubulin/FtsZ-like_C"/>
</dbReference>
<dbReference type="InterPro" id="IPR018316">
    <property type="entry name" value="Tubulin/FtsZ_2-layer-sand-dom"/>
</dbReference>
<dbReference type="InterPro" id="IPR036525">
    <property type="entry name" value="Tubulin/FtsZ_GTPase_sf"/>
</dbReference>
<dbReference type="InterPro" id="IPR023123">
    <property type="entry name" value="Tubulin_C"/>
</dbReference>
<dbReference type="InterPro" id="IPR017975">
    <property type="entry name" value="Tubulin_CS"/>
</dbReference>
<dbReference type="InterPro" id="IPR003008">
    <property type="entry name" value="Tubulin_FtsZ_GTPase"/>
</dbReference>
<dbReference type="PANTHER" id="PTHR11588">
    <property type="entry name" value="TUBULIN"/>
    <property type="match status" value="1"/>
</dbReference>
<dbReference type="Pfam" id="PF00091">
    <property type="entry name" value="Tubulin"/>
    <property type="match status" value="1"/>
</dbReference>
<dbReference type="Pfam" id="PF03953">
    <property type="entry name" value="Tubulin_C"/>
    <property type="match status" value="1"/>
</dbReference>
<dbReference type="PRINTS" id="PR01162">
    <property type="entry name" value="ALPHATUBULIN"/>
</dbReference>
<dbReference type="PRINTS" id="PR01161">
    <property type="entry name" value="TUBULIN"/>
</dbReference>
<dbReference type="SMART" id="SM00864">
    <property type="entry name" value="Tubulin"/>
    <property type="match status" value="1"/>
</dbReference>
<dbReference type="SMART" id="SM00865">
    <property type="entry name" value="Tubulin_C"/>
    <property type="match status" value="1"/>
</dbReference>
<dbReference type="SUPFAM" id="SSF55307">
    <property type="entry name" value="Tubulin C-terminal domain-like"/>
    <property type="match status" value="1"/>
</dbReference>
<dbReference type="SUPFAM" id="SSF52490">
    <property type="entry name" value="Tubulin nucleotide-binding domain-like"/>
    <property type="match status" value="1"/>
</dbReference>
<dbReference type="PROSITE" id="PS00227">
    <property type="entry name" value="TUBULIN"/>
    <property type="match status" value="1"/>
</dbReference>
<accession>Q94572</accession>
<organism>
    <name type="scientific">Homarus americanus</name>
    <name type="common">American lobster</name>
    <dbReference type="NCBI Taxonomy" id="6706"/>
    <lineage>
        <taxon>Eukaryota</taxon>
        <taxon>Metazoa</taxon>
        <taxon>Ecdysozoa</taxon>
        <taxon>Arthropoda</taxon>
        <taxon>Crustacea</taxon>
        <taxon>Multicrustacea</taxon>
        <taxon>Malacostraca</taxon>
        <taxon>Eumalacostraca</taxon>
        <taxon>Eucarida</taxon>
        <taxon>Decapoda</taxon>
        <taxon>Pleocyemata</taxon>
        <taxon>Astacidea</taxon>
        <taxon>Nephropoidea</taxon>
        <taxon>Nephropidae</taxon>
        <taxon>Homarus</taxon>
    </lineage>
</organism>
<evidence type="ECO:0000250" key="1"/>
<evidence type="ECO:0000250" key="2">
    <source>
        <dbReference type="UniProtKB" id="P68363"/>
    </source>
</evidence>
<evidence type="ECO:0000305" key="3"/>
<sequence>MRECISIHVGQAGAQMGNACWELYCLEHGIQPDGQMPSDKTIGGGDDSFNTFFCETGAGKHVPRAVFVDLEPTVIDEIRTGVYRQLFHPEQLITGKEDAANNYARGHYTIGKEIVDIVLDRIRKLADNCAGLQGFLIFHSFGGGTGSGFTSLLMERLSVDYGKKSKLEFAIYPAPQVATAVVEPYNSILTTHTTLEHSDCAFMVDNEAIYDICRRNLDIERPTYTNLNRLIGQIVSSITASLRFDGALNVDLTEFQTNLVPYPRIHFPLVTYAPVISAEKAYHEQLSVSEITNACFEPANQMVKCDPRHGKYMACCLLYRGDVVPKDVNAAIATIKTKRSIQFVDWCPTGFKVGINYQPPTAVPGGDLAKVSRAVCMLSNTTAIAEAWARLDHKFDLMYAKRAFVHWYVGEGMEEGEFTEAREDLAALEKDYEEVGVDSADAEGEEEGEEY</sequence>
<reference key="1">
    <citation type="journal article" date="1996" name="Gene">
        <title>Multiple lobster tubulin isoforms are encoded by a simple gene family.</title>
        <authorList>
            <person name="Demers D.M."/>
            <person name="Metcalf A.E."/>
            <person name="Talbot P."/>
            <person name="Hyman B.C."/>
        </authorList>
    </citation>
    <scope>NUCLEOTIDE SEQUENCE [MRNA]</scope>
</reference>
<keyword id="KW-0007">Acetylation</keyword>
<keyword id="KW-0963">Cytoplasm</keyword>
<keyword id="KW-0206">Cytoskeleton</keyword>
<keyword id="KW-0342">GTP-binding</keyword>
<keyword id="KW-0378">Hydrolase</keyword>
<keyword id="KW-0460">Magnesium</keyword>
<keyword id="KW-0479">Metal-binding</keyword>
<keyword id="KW-0493">Microtubule</keyword>
<keyword id="KW-0547">Nucleotide-binding</keyword>
<comment type="function">
    <text>Tubulin is the major constituent of microtubules, a cylinder consisting of laterally associated linear protofilaments composed of alpha- and beta-tubulin heterodimers. Microtubules grow by the addition of GTP-tubulin dimers to the microtubule end, where a stabilizing cap forms. Below the cap, tubulin dimers are in GDP-bound state, owing to GTPase activity of alpha-tubulin.</text>
</comment>
<comment type="catalytic activity">
    <reaction evidence="2">
        <text>GTP + H2O = GDP + phosphate + H(+)</text>
        <dbReference type="Rhea" id="RHEA:19669"/>
        <dbReference type="ChEBI" id="CHEBI:15377"/>
        <dbReference type="ChEBI" id="CHEBI:15378"/>
        <dbReference type="ChEBI" id="CHEBI:37565"/>
        <dbReference type="ChEBI" id="CHEBI:43474"/>
        <dbReference type="ChEBI" id="CHEBI:58189"/>
    </reaction>
    <physiologicalReaction direction="left-to-right" evidence="2">
        <dbReference type="Rhea" id="RHEA:19670"/>
    </physiologicalReaction>
</comment>
<comment type="cofactor">
    <cofactor evidence="2">
        <name>Mg(2+)</name>
        <dbReference type="ChEBI" id="CHEBI:18420"/>
    </cofactor>
</comment>
<comment type="subunit">
    <text>Dimer of alpha and beta chains. A typical microtubule is a hollow water-filled tube with an outer diameter of 25 nm and an inner diameter of 15 nM. Alpha-beta heterodimers associate head-to-tail to form protofilaments running lengthwise along the microtubule wall with the beta-tubulin subunit facing the microtubule plus end conferring a structural polarity. Microtubules usually have 13 protofilaments but different protofilament numbers can be found in some organisms and specialized cells.</text>
</comment>
<comment type="subcellular location">
    <subcellularLocation>
        <location>Cytoplasm</location>
        <location>Cytoskeleton</location>
    </subcellularLocation>
</comment>
<comment type="PTM">
    <text evidence="1">Undergoes a tyrosination/detyrosination cycle, the cyclic removal and re-addition of a C-terminal tyrosine residue by the enzymes tubulin tyrosine carboxypeptidase (TTCP) and tubulin tyrosine ligase (TTL), respectively.</text>
</comment>
<comment type="PTM">
    <text evidence="1">Acetylation of alpha chains at Lys-40 stabilizes microtubules and affects affinity and processivity of microtubule motors. This modification has a role in multiple cellular functions, ranging from cell motility, cell cycle progression or cell differentiation to intracellular trafficking and signaling (By similarity).</text>
</comment>
<comment type="similarity">
    <text evidence="3">Belongs to the tubulin family.</text>
</comment>
<feature type="chain" id="PRO_0000048181" description="Tubulin alpha-3 chain">
    <location>
        <begin position="1"/>
        <end position="451"/>
    </location>
</feature>
<feature type="active site" evidence="2">
    <location>
        <position position="254"/>
    </location>
</feature>
<feature type="binding site" evidence="2">
    <location>
        <position position="11"/>
    </location>
    <ligand>
        <name>GTP</name>
        <dbReference type="ChEBI" id="CHEBI:37565"/>
    </ligand>
</feature>
<feature type="binding site" evidence="2">
    <location>
        <position position="71"/>
    </location>
    <ligand>
        <name>GTP</name>
        <dbReference type="ChEBI" id="CHEBI:37565"/>
    </ligand>
</feature>
<feature type="binding site" evidence="2">
    <location>
        <position position="71"/>
    </location>
    <ligand>
        <name>Mg(2+)</name>
        <dbReference type="ChEBI" id="CHEBI:18420"/>
    </ligand>
</feature>
<feature type="binding site" evidence="2">
    <location>
        <position position="140"/>
    </location>
    <ligand>
        <name>GTP</name>
        <dbReference type="ChEBI" id="CHEBI:37565"/>
    </ligand>
</feature>
<feature type="binding site" evidence="2">
    <location>
        <position position="144"/>
    </location>
    <ligand>
        <name>GTP</name>
        <dbReference type="ChEBI" id="CHEBI:37565"/>
    </ligand>
</feature>
<feature type="binding site" evidence="2">
    <location>
        <position position="145"/>
    </location>
    <ligand>
        <name>GTP</name>
        <dbReference type="ChEBI" id="CHEBI:37565"/>
    </ligand>
</feature>
<feature type="binding site" evidence="2">
    <location>
        <position position="179"/>
    </location>
    <ligand>
        <name>GTP</name>
        <dbReference type="ChEBI" id="CHEBI:37565"/>
    </ligand>
</feature>
<feature type="binding site" evidence="2">
    <location>
        <position position="206"/>
    </location>
    <ligand>
        <name>GTP</name>
        <dbReference type="ChEBI" id="CHEBI:37565"/>
    </ligand>
</feature>
<feature type="binding site" evidence="2">
    <location>
        <position position="228"/>
    </location>
    <ligand>
        <name>GTP</name>
        <dbReference type="ChEBI" id="CHEBI:37565"/>
    </ligand>
</feature>
<feature type="site" description="Involved in polymerization">
    <location>
        <position position="451"/>
    </location>
</feature>
<feature type="modified residue" description="N6-acetyllysine" evidence="1">
    <location>
        <position position="40"/>
    </location>
</feature>
<protein>
    <recommendedName>
        <fullName>Tubulin alpha-3 chain</fullName>
        <ecNumber evidence="2">3.6.5.-</ecNumber>
    </recommendedName>
    <alternativeName>
        <fullName>Alpha-III tubulin</fullName>
    </alternativeName>
</protein>
<proteinExistence type="evidence at transcript level"/>